<comment type="function">
    <text evidence="1">Negatively regulates transcription of bacterial ribonucleotide reductase nrd genes and operons by binding to NrdR-boxes.</text>
</comment>
<comment type="cofactor">
    <cofactor evidence="1">
        <name>Zn(2+)</name>
        <dbReference type="ChEBI" id="CHEBI:29105"/>
    </cofactor>
    <text evidence="1">Binds 1 zinc ion.</text>
</comment>
<comment type="similarity">
    <text evidence="1">Belongs to the NrdR family.</text>
</comment>
<keyword id="KW-0067">ATP-binding</keyword>
<keyword id="KW-0238">DNA-binding</keyword>
<keyword id="KW-0479">Metal-binding</keyword>
<keyword id="KW-0547">Nucleotide-binding</keyword>
<keyword id="KW-0678">Repressor</keyword>
<keyword id="KW-0804">Transcription</keyword>
<keyword id="KW-0805">Transcription regulation</keyword>
<keyword id="KW-0862">Zinc</keyword>
<keyword id="KW-0863">Zinc-finger</keyword>
<gene>
    <name evidence="1" type="primary">nrdR</name>
    <name type="ordered locus">SBO_0307</name>
</gene>
<protein>
    <recommendedName>
        <fullName evidence="1">Transcriptional repressor NrdR</fullName>
    </recommendedName>
</protein>
<organism>
    <name type="scientific">Shigella boydii serotype 4 (strain Sb227)</name>
    <dbReference type="NCBI Taxonomy" id="300268"/>
    <lineage>
        <taxon>Bacteria</taxon>
        <taxon>Pseudomonadati</taxon>
        <taxon>Pseudomonadota</taxon>
        <taxon>Gammaproteobacteria</taxon>
        <taxon>Enterobacterales</taxon>
        <taxon>Enterobacteriaceae</taxon>
        <taxon>Shigella</taxon>
    </lineage>
</organism>
<proteinExistence type="inferred from homology"/>
<feature type="chain" id="PRO_0000230891" description="Transcriptional repressor NrdR">
    <location>
        <begin position="1"/>
        <end position="149"/>
    </location>
</feature>
<feature type="domain" description="ATP-cone" evidence="1">
    <location>
        <begin position="49"/>
        <end position="139"/>
    </location>
</feature>
<feature type="zinc finger region" evidence="1">
    <location>
        <begin position="3"/>
        <end position="34"/>
    </location>
</feature>
<reference key="1">
    <citation type="journal article" date="2005" name="Nucleic Acids Res.">
        <title>Genome dynamics and diversity of Shigella species, the etiologic agents of bacillary dysentery.</title>
        <authorList>
            <person name="Yang F."/>
            <person name="Yang J."/>
            <person name="Zhang X."/>
            <person name="Chen L."/>
            <person name="Jiang Y."/>
            <person name="Yan Y."/>
            <person name="Tang X."/>
            <person name="Wang J."/>
            <person name="Xiong Z."/>
            <person name="Dong J."/>
            <person name="Xue Y."/>
            <person name="Zhu Y."/>
            <person name="Xu X."/>
            <person name="Sun L."/>
            <person name="Chen S."/>
            <person name="Nie H."/>
            <person name="Peng J."/>
            <person name="Xu J."/>
            <person name="Wang Y."/>
            <person name="Yuan Z."/>
            <person name="Wen Y."/>
            <person name="Yao Z."/>
            <person name="Shen Y."/>
            <person name="Qiang B."/>
            <person name="Hou Y."/>
            <person name="Yu J."/>
            <person name="Jin Q."/>
        </authorList>
    </citation>
    <scope>NUCLEOTIDE SEQUENCE [LARGE SCALE GENOMIC DNA]</scope>
    <source>
        <strain>Sb227</strain>
    </source>
</reference>
<dbReference type="EMBL" id="CP000036">
    <property type="protein sequence ID" value="ABB65020.1"/>
    <property type="molecule type" value="Genomic_DNA"/>
</dbReference>
<dbReference type="RefSeq" id="WP_000543535.1">
    <property type="nucleotide sequence ID" value="NC_007613.1"/>
</dbReference>
<dbReference type="SMR" id="Q325I8"/>
<dbReference type="GeneID" id="93777047"/>
<dbReference type="KEGG" id="sbo:SBO_0307"/>
<dbReference type="HOGENOM" id="CLU_108412_0_0_6"/>
<dbReference type="Proteomes" id="UP000007067">
    <property type="component" value="Chromosome"/>
</dbReference>
<dbReference type="GO" id="GO:0005524">
    <property type="term" value="F:ATP binding"/>
    <property type="evidence" value="ECO:0007669"/>
    <property type="project" value="UniProtKB-KW"/>
</dbReference>
<dbReference type="GO" id="GO:0003677">
    <property type="term" value="F:DNA binding"/>
    <property type="evidence" value="ECO:0007669"/>
    <property type="project" value="UniProtKB-KW"/>
</dbReference>
<dbReference type="GO" id="GO:0008270">
    <property type="term" value="F:zinc ion binding"/>
    <property type="evidence" value="ECO:0007669"/>
    <property type="project" value="UniProtKB-UniRule"/>
</dbReference>
<dbReference type="GO" id="GO:0045892">
    <property type="term" value="P:negative regulation of DNA-templated transcription"/>
    <property type="evidence" value="ECO:0007669"/>
    <property type="project" value="UniProtKB-UniRule"/>
</dbReference>
<dbReference type="HAMAP" id="MF_00440">
    <property type="entry name" value="NrdR"/>
    <property type="match status" value="1"/>
</dbReference>
<dbReference type="InterPro" id="IPR005144">
    <property type="entry name" value="ATP-cone_dom"/>
</dbReference>
<dbReference type="InterPro" id="IPR055173">
    <property type="entry name" value="NrdR-like_N"/>
</dbReference>
<dbReference type="InterPro" id="IPR003796">
    <property type="entry name" value="RNR_NrdR-like"/>
</dbReference>
<dbReference type="NCBIfam" id="TIGR00244">
    <property type="entry name" value="transcriptional regulator NrdR"/>
    <property type="match status" value="1"/>
</dbReference>
<dbReference type="PANTHER" id="PTHR30455">
    <property type="entry name" value="TRANSCRIPTIONAL REPRESSOR NRDR"/>
    <property type="match status" value="1"/>
</dbReference>
<dbReference type="PANTHER" id="PTHR30455:SF2">
    <property type="entry name" value="TRANSCRIPTIONAL REPRESSOR NRDR"/>
    <property type="match status" value="1"/>
</dbReference>
<dbReference type="Pfam" id="PF03477">
    <property type="entry name" value="ATP-cone"/>
    <property type="match status" value="1"/>
</dbReference>
<dbReference type="Pfam" id="PF22811">
    <property type="entry name" value="Zn_ribbon_NrdR"/>
    <property type="match status" value="1"/>
</dbReference>
<dbReference type="PROSITE" id="PS51161">
    <property type="entry name" value="ATP_CONE"/>
    <property type="match status" value="1"/>
</dbReference>
<accession>Q325I8</accession>
<sequence>MHCPFCFAVDTKVIDSRLVGEGSSVRRRRQCLVCNERFTTFEVAELVMPRVVKSNDVREPFNEEKLRSGMLRALEKRPVSSDDVEMAINHIKSQLRATGEREVPSKMIGNLVMEQLKKLDKVAYIRFASVYRSFEDIKEFGEEIARLED</sequence>
<name>NRDR_SHIBS</name>
<evidence type="ECO:0000255" key="1">
    <source>
        <dbReference type="HAMAP-Rule" id="MF_00440"/>
    </source>
</evidence>